<feature type="chain" id="PRO_1000053455" description="Phosphatidylglycerol--prolipoprotein diacylglyceryl transferase">
    <location>
        <begin position="1"/>
        <end position="468"/>
    </location>
</feature>
<feature type="transmembrane region" description="Helical" evidence="1">
    <location>
        <begin position="21"/>
        <end position="41"/>
    </location>
</feature>
<feature type="transmembrane region" description="Helical" evidence="1">
    <location>
        <begin position="56"/>
        <end position="76"/>
    </location>
</feature>
<feature type="transmembrane region" description="Helical" evidence="1">
    <location>
        <begin position="96"/>
        <end position="116"/>
    </location>
</feature>
<feature type="transmembrane region" description="Helical" evidence="1">
    <location>
        <begin position="192"/>
        <end position="212"/>
    </location>
</feature>
<feature type="transmembrane region" description="Helical" evidence="1">
    <location>
        <begin position="218"/>
        <end position="238"/>
    </location>
</feature>
<feature type="transmembrane region" description="Helical" evidence="1">
    <location>
        <begin position="256"/>
        <end position="276"/>
    </location>
</feature>
<feature type="region of interest" description="Disordered" evidence="2">
    <location>
        <begin position="349"/>
        <end position="468"/>
    </location>
</feature>
<feature type="compositionally biased region" description="Low complexity" evidence="2">
    <location>
        <begin position="391"/>
        <end position="406"/>
    </location>
</feature>
<feature type="compositionally biased region" description="Basic and acidic residues" evidence="2">
    <location>
        <begin position="445"/>
        <end position="455"/>
    </location>
</feature>
<feature type="compositionally biased region" description="Basic residues" evidence="2">
    <location>
        <begin position="456"/>
        <end position="468"/>
    </location>
</feature>
<feature type="binding site" evidence="1">
    <location>
        <position position="144"/>
    </location>
    <ligand>
        <name>a 1,2-diacyl-sn-glycero-3-phospho-(1'-sn-glycerol)</name>
        <dbReference type="ChEBI" id="CHEBI:64716"/>
    </ligand>
</feature>
<gene>
    <name evidence="1" type="primary">lgt</name>
    <name type="ordered locus">BCG_1652</name>
</gene>
<protein>
    <recommendedName>
        <fullName evidence="1">Phosphatidylglycerol--prolipoprotein diacylglyceryl transferase</fullName>
        <ecNumber evidence="1">2.5.1.145</ecNumber>
    </recommendedName>
</protein>
<evidence type="ECO:0000255" key="1">
    <source>
        <dbReference type="HAMAP-Rule" id="MF_01147"/>
    </source>
</evidence>
<evidence type="ECO:0000256" key="2">
    <source>
        <dbReference type="SAM" id="MobiDB-lite"/>
    </source>
</evidence>
<proteinExistence type="inferred from homology"/>
<comment type="function">
    <text evidence="1">Catalyzes the transfer of the diacylglyceryl group from phosphatidylglycerol to the sulfhydryl group of the N-terminal cysteine of a prolipoprotein, the first step in the formation of mature lipoproteins.</text>
</comment>
<comment type="catalytic activity">
    <reaction evidence="1">
        <text>L-cysteinyl-[prolipoprotein] + a 1,2-diacyl-sn-glycero-3-phospho-(1'-sn-glycerol) = an S-1,2-diacyl-sn-glyceryl-L-cysteinyl-[prolipoprotein] + sn-glycerol 1-phosphate + H(+)</text>
        <dbReference type="Rhea" id="RHEA:56712"/>
        <dbReference type="Rhea" id="RHEA-COMP:14679"/>
        <dbReference type="Rhea" id="RHEA-COMP:14680"/>
        <dbReference type="ChEBI" id="CHEBI:15378"/>
        <dbReference type="ChEBI" id="CHEBI:29950"/>
        <dbReference type="ChEBI" id="CHEBI:57685"/>
        <dbReference type="ChEBI" id="CHEBI:64716"/>
        <dbReference type="ChEBI" id="CHEBI:140658"/>
        <dbReference type="EC" id="2.5.1.145"/>
    </reaction>
</comment>
<comment type="pathway">
    <text evidence="1">Protein modification; lipoprotein biosynthesis (diacylglyceryl transfer).</text>
</comment>
<comment type="subcellular location">
    <subcellularLocation>
        <location evidence="1">Cell membrane</location>
        <topology evidence="1">Multi-pass membrane protein</topology>
    </subcellularLocation>
</comment>
<comment type="similarity">
    <text evidence="1">Belongs to the Lgt family.</text>
</comment>
<organism>
    <name type="scientific">Mycobacterium bovis (strain BCG / Pasteur 1173P2)</name>
    <dbReference type="NCBI Taxonomy" id="410289"/>
    <lineage>
        <taxon>Bacteria</taxon>
        <taxon>Bacillati</taxon>
        <taxon>Actinomycetota</taxon>
        <taxon>Actinomycetes</taxon>
        <taxon>Mycobacteriales</taxon>
        <taxon>Mycobacteriaceae</taxon>
        <taxon>Mycobacterium</taxon>
        <taxon>Mycobacterium tuberculosis complex</taxon>
    </lineage>
</organism>
<keyword id="KW-1003">Cell membrane</keyword>
<keyword id="KW-0472">Membrane</keyword>
<keyword id="KW-0808">Transferase</keyword>
<keyword id="KW-0812">Transmembrane</keyword>
<keyword id="KW-1133">Transmembrane helix</keyword>
<reference key="1">
    <citation type="journal article" date="2007" name="Proc. Natl. Acad. Sci. U.S.A.">
        <title>Genome plasticity of BCG and impact on vaccine efficacy.</title>
        <authorList>
            <person name="Brosch R."/>
            <person name="Gordon S.V."/>
            <person name="Garnier T."/>
            <person name="Eiglmeier K."/>
            <person name="Frigui W."/>
            <person name="Valenti P."/>
            <person name="Dos Santos S."/>
            <person name="Duthoy S."/>
            <person name="Lacroix C."/>
            <person name="Garcia-Pelayo C."/>
            <person name="Inwald J.K."/>
            <person name="Golby P."/>
            <person name="Garcia J.N."/>
            <person name="Hewinson R.G."/>
            <person name="Behr M.A."/>
            <person name="Quail M.A."/>
            <person name="Churcher C."/>
            <person name="Barrell B.G."/>
            <person name="Parkhill J."/>
            <person name="Cole S.T."/>
        </authorList>
    </citation>
    <scope>NUCLEOTIDE SEQUENCE [LARGE SCALE GENOMIC DNA]</scope>
    <source>
        <strain>BCG / Pasteur 1173P2</strain>
    </source>
</reference>
<accession>A1KJ30</accession>
<name>LGT_MYCBP</name>
<sequence length="468" mass="50392">MRMLPSYIPSPPRGVWYLGPLPVRAYAVCVITGIIVALLIGDRRLTARGGERGMTYDIALWAVPFGLIGGRLYHLATDWRTYFGDGGAGLAAALRIWDGGLGIWGAVTLGVMGAWIGCRRCGIPLPVLLDAVAPGVVLAQAIGRLGNYFNQELYGRETTMPWGLEIFYRRDPSGFDVPNSLDGVSTGQVAFVVQPTFLYELIWNVLVFVALIYIDRRFIIGHGRLFGFYVAFYCAGRFCVELLRDDPATLIAGIRINSFTSTFVFIGAVVYIILAPKGREAPGALRGSEYVVDEALEREPAELAAAAVASAASAVGPVGPGEPNQPDDVAEAVKAEVAEVTDEVAAESVVQVADRDGESTPAVEETSEADIEREQPGDLAGQAPAAHQVDAEAASAAPEEPAALASEAHDETEPEVPEKAAPIPDPAKPDELAVAGPGDDPAEPDGIRRQDDFSSRRRRWWRLRRRRQ</sequence>
<dbReference type="EC" id="2.5.1.145" evidence="1"/>
<dbReference type="EMBL" id="AM408590">
    <property type="protein sequence ID" value="CAL71639.1"/>
    <property type="molecule type" value="Genomic_DNA"/>
</dbReference>
<dbReference type="RefSeq" id="WP_003408002.1">
    <property type="nucleotide sequence ID" value="NC_008769.1"/>
</dbReference>
<dbReference type="SMR" id="A1KJ30"/>
<dbReference type="KEGG" id="mbb:BCG_1652"/>
<dbReference type="HOGENOM" id="CLU_013386_2_1_11"/>
<dbReference type="UniPathway" id="UPA00664"/>
<dbReference type="Proteomes" id="UP000001472">
    <property type="component" value="Chromosome"/>
</dbReference>
<dbReference type="GO" id="GO:0005886">
    <property type="term" value="C:plasma membrane"/>
    <property type="evidence" value="ECO:0007669"/>
    <property type="project" value="UniProtKB-SubCell"/>
</dbReference>
<dbReference type="GO" id="GO:0008961">
    <property type="term" value="F:phosphatidylglycerol-prolipoprotein diacylglyceryl transferase activity"/>
    <property type="evidence" value="ECO:0007669"/>
    <property type="project" value="UniProtKB-UniRule"/>
</dbReference>
<dbReference type="GO" id="GO:0042158">
    <property type="term" value="P:lipoprotein biosynthetic process"/>
    <property type="evidence" value="ECO:0007669"/>
    <property type="project" value="UniProtKB-UniRule"/>
</dbReference>
<dbReference type="HAMAP" id="MF_01147">
    <property type="entry name" value="Lgt"/>
    <property type="match status" value="1"/>
</dbReference>
<dbReference type="InterPro" id="IPR001640">
    <property type="entry name" value="Lgt"/>
</dbReference>
<dbReference type="NCBIfam" id="TIGR00544">
    <property type="entry name" value="lgt"/>
    <property type="match status" value="1"/>
</dbReference>
<dbReference type="NCBIfam" id="NF009611">
    <property type="entry name" value="PRK13108.1"/>
    <property type="match status" value="1"/>
</dbReference>
<dbReference type="PANTHER" id="PTHR30589:SF0">
    <property type="entry name" value="PHOSPHATIDYLGLYCEROL--PROLIPOPROTEIN DIACYLGLYCERYL TRANSFERASE"/>
    <property type="match status" value="1"/>
</dbReference>
<dbReference type="PANTHER" id="PTHR30589">
    <property type="entry name" value="PROLIPOPROTEIN DIACYLGLYCERYL TRANSFERASE"/>
    <property type="match status" value="1"/>
</dbReference>
<dbReference type="Pfam" id="PF01790">
    <property type="entry name" value="LGT"/>
    <property type="match status" value="1"/>
</dbReference>
<dbReference type="PROSITE" id="PS01311">
    <property type="entry name" value="LGT"/>
    <property type="match status" value="1"/>
</dbReference>